<protein>
    <recommendedName>
        <fullName evidence="1">ATP synthase gamma chain</fullName>
    </recommendedName>
    <alternativeName>
        <fullName evidence="1">ATP synthase F1 sector gamma subunit</fullName>
    </alternativeName>
    <alternativeName>
        <fullName evidence="1">F-ATPase gamma subunit</fullName>
    </alternativeName>
</protein>
<sequence length="292" mass="32222">MAGSLREIKAKIASIKQTSHITGAMQMVSASKLTRSEQAAKDFQIYASKIRQITTDLLHSELVNGSSNPMLDARPVRKSGYIVITSDKGLVGGYNSTILKAVLDMIKRDHDSEDEYAIISIGGTGSDFFKARNMNVAFELRGLEDQPSFDQVGKIISKAVGMYQNELFDELYVCYNHHINSLSREVRVEKMLPIADFDPNESEGHVLTKFELEPDRDTILDQLLPQYAESLIYGAIVDAKTAEHAAGMTAMQTATDNAKKIINDLTIQYNRARQAAITQEITEIVGGASALE</sequence>
<keyword id="KW-0066">ATP synthesis</keyword>
<keyword id="KW-1003">Cell membrane</keyword>
<keyword id="KW-0139">CF(1)</keyword>
<keyword id="KW-0375">Hydrogen ion transport</keyword>
<keyword id="KW-0406">Ion transport</keyword>
<keyword id="KW-0472">Membrane</keyword>
<keyword id="KW-0813">Transport</keyword>
<name>ATPG_STRTR</name>
<accession>Q8RKV3</accession>
<comment type="function">
    <text evidence="1">Produces ATP from ADP in the presence of a proton gradient across the membrane. The gamma chain is believed to be important in regulating ATPase activity and the flow of protons through the CF(0) complex.</text>
</comment>
<comment type="subunit">
    <text evidence="1">F-type ATPases have 2 components, CF(1) - the catalytic core - and CF(0) - the membrane proton channel. CF(1) has five subunits: alpha(3), beta(3), gamma(1), delta(1), epsilon(1). CF(0) has three main subunits: a, b and c.</text>
</comment>
<comment type="subcellular location">
    <subcellularLocation>
        <location evidence="1">Cell membrane</location>
        <topology evidence="1">Peripheral membrane protein</topology>
    </subcellularLocation>
</comment>
<comment type="similarity">
    <text evidence="1">Belongs to the ATPase gamma chain family.</text>
</comment>
<proteinExistence type="inferred from homology"/>
<feature type="chain" id="PRO_0000073395" description="ATP synthase gamma chain">
    <location>
        <begin position="1"/>
        <end position="292"/>
    </location>
</feature>
<evidence type="ECO:0000255" key="1">
    <source>
        <dbReference type="HAMAP-Rule" id="MF_00815"/>
    </source>
</evidence>
<dbReference type="EMBL" id="AY090612">
    <property type="protein sequence ID" value="AAM01189.1"/>
    <property type="molecule type" value="Genomic_DNA"/>
</dbReference>
<dbReference type="RefSeq" id="WP_002949964.1">
    <property type="nucleotide sequence ID" value="NZ_WMLD01000004.1"/>
</dbReference>
<dbReference type="SMR" id="Q8RKV3"/>
<dbReference type="eggNOG" id="COG0224">
    <property type="taxonomic scope" value="Bacteria"/>
</dbReference>
<dbReference type="OMA" id="MQITSAM"/>
<dbReference type="OrthoDB" id="9812769at2"/>
<dbReference type="GO" id="GO:0005886">
    <property type="term" value="C:plasma membrane"/>
    <property type="evidence" value="ECO:0007669"/>
    <property type="project" value="UniProtKB-SubCell"/>
</dbReference>
<dbReference type="GO" id="GO:0045259">
    <property type="term" value="C:proton-transporting ATP synthase complex"/>
    <property type="evidence" value="ECO:0007669"/>
    <property type="project" value="UniProtKB-KW"/>
</dbReference>
<dbReference type="GO" id="GO:0005524">
    <property type="term" value="F:ATP binding"/>
    <property type="evidence" value="ECO:0007669"/>
    <property type="project" value="UniProtKB-UniRule"/>
</dbReference>
<dbReference type="GO" id="GO:0046933">
    <property type="term" value="F:proton-transporting ATP synthase activity, rotational mechanism"/>
    <property type="evidence" value="ECO:0007669"/>
    <property type="project" value="UniProtKB-UniRule"/>
</dbReference>
<dbReference type="GO" id="GO:0042777">
    <property type="term" value="P:proton motive force-driven plasma membrane ATP synthesis"/>
    <property type="evidence" value="ECO:0007669"/>
    <property type="project" value="UniProtKB-UniRule"/>
</dbReference>
<dbReference type="CDD" id="cd12151">
    <property type="entry name" value="F1-ATPase_gamma"/>
    <property type="match status" value="1"/>
</dbReference>
<dbReference type="FunFam" id="3.40.1380.10:FF:000002">
    <property type="entry name" value="ATP synthase gamma chain"/>
    <property type="match status" value="1"/>
</dbReference>
<dbReference type="Gene3D" id="3.40.1380.10">
    <property type="match status" value="1"/>
</dbReference>
<dbReference type="Gene3D" id="1.10.287.80">
    <property type="entry name" value="ATP synthase, gamma subunit, helix hairpin domain"/>
    <property type="match status" value="1"/>
</dbReference>
<dbReference type="HAMAP" id="MF_00815">
    <property type="entry name" value="ATP_synth_gamma_bact"/>
    <property type="match status" value="1"/>
</dbReference>
<dbReference type="InterPro" id="IPR035968">
    <property type="entry name" value="ATP_synth_F1_ATPase_gsu"/>
</dbReference>
<dbReference type="InterPro" id="IPR000131">
    <property type="entry name" value="ATP_synth_F1_gsu"/>
</dbReference>
<dbReference type="InterPro" id="IPR023632">
    <property type="entry name" value="ATP_synth_F1_gsu_CS"/>
</dbReference>
<dbReference type="NCBIfam" id="TIGR01146">
    <property type="entry name" value="ATPsyn_F1gamma"/>
    <property type="match status" value="1"/>
</dbReference>
<dbReference type="NCBIfam" id="NF004147">
    <property type="entry name" value="PRK05621.2-1"/>
    <property type="match status" value="1"/>
</dbReference>
<dbReference type="PANTHER" id="PTHR11693">
    <property type="entry name" value="ATP SYNTHASE GAMMA CHAIN"/>
    <property type="match status" value="1"/>
</dbReference>
<dbReference type="PANTHER" id="PTHR11693:SF22">
    <property type="entry name" value="ATP SYNTHASE SUBUNIT GAMMA, MITOCHONDRIAL"/>
    <property type="match status" value="1"/>
</dbReference>
<dbReference type="Pfam" id="PF00231">
    <property type="entry name" value="ATP-synt"/>
    <property type="match status" value="1"/>
</dbReference>
<dbReference type="PRINTS" id="PR00126">
    <property type="entry name" value="ATPASEGAMMA"/>
</dbReference>
<dbReference type="SUPFAM" id="SSF52943">
    <property type="entry name" value="ATP synthase (F1-ATPase), gamma subunit"/>
    <property type="match status" value="1"/>
</dbReference>
<dbReference type="PROSITE" id="PS00153">
    <property type="entry name" value="ATPASE_GAMMA"/>
    <property type="match status" value="1"/>
</dbReference>
<reference key="1">
    <citation type="submission" date="2002-03" db="EMBL/GenBank/DDBJ databases">
        <title>The atpAGD genes encoding the ATP hydrolyzing F1 unit of the H+-ATPase of Streptococcus thermophilus.</title>
        <authorList>
            <person name="Kragelund L."/>
            <person name="Pedersen M.B."/>
        </authorList>
    </citation>
    <scope>NUCLEOTIDE SEQUENCE [GENOMIC DNA]</scope>
    <source>
        <strain>CHCC2136</strain>
    </source>
</reference>
<organism>
    <name type="scientific">Streptococcus thermophilus</name>
    <dbReference type="NCBI Taxonomy" id="1308"/>
    <lineage>
        <taxon>Bacteria</taxon>
        <taxon>Bacillati</taxon>
        <taxon>Bacillota</taxon>
        <taxon>Bacilli</taxon>
        <taxon>Lactobacillales</taxon>
        <taxon>Streptococcaceae</taxon>
        <taxon>Streptococcus</taxon>
    </lineage>
</organism>
<gene>
    <name evidence="1" type="primary">atpG</name>
</gene>